<sequence>MSKRETFNETFLKAARGEKADHTPVWYMRQAGRSQPEYRKLKEKYGLFEITHQPELCAYVTRLPVEQYGVDAAILYKDIMTPLPSIGVDVEIKNGIGPVIDQPIRSLADIEKLGQIDPEQDVPYVLETIKLLVNEQLNVPLIGFSGAPFTLASYMIEGGPSKNYNKTKAFMYSMPDAWNLLMSKLADMIIVYVKAQIEAGAKAIQIFDSWVGALNQADYRTYIKPVMNRIFSELAKENVPLIMFGVGASHLAGDWHDLPLDVVGLDWRLGIDEARSKGITKTVQGNLDPSILLAPWEVIEQKTKEILDQGMESDGFIFNLGHGVFPDVSPEVLKKLTAFVHEYSQNKKMGQYS</sequence>
<protein>
    <recommendedName>
        <fullName>Uroporphyrinogen decarboxylase</fullName>
        <shortName>UPD</shortName>
        <shortName>URO-D</shortName>
        <ecNumber>4.1.1.37</ecNumber>
    </recommendedName>
</protein>
<accession>P32395</accession>
<organism>
    <name type="scientific">Bacillus subtilis (strain 168)</name>
    <dbReference type="NCBI Taxonomy" id="224308"/>
    <lineage>
        <taxon>Bacteria</taxon>
        <taxon>Bacillati</taxon>
        <taxon>Bacillota</taxon>
        <taxon>Bacilli</taxon>
        <taxon>Bacillales</taxon>
        <taxon>Bacillaceae</taxon>
        <taxon>Bacillus</taxon>
    </lineage>
</organism>
<feature type="chain" id="PRO_0000187584" description="Uroporphyrinogen decarboxylase">
    <location>
        <begin position="1"/>
        <end position="353"/>
    </location>
</feature>
<feature type="binding site" evidence="1">
    <location>
        <begin position="29"/>
        <end position="33"/>
    </location>
    <ligand>
        <name>substrate</name>
    </ligand>
</feature>
<feature type="binding site" evidence="1">
    <location>
        <position position="48"/>
    </location>
    <ligand>
        <name>substrate</name>
    </ligand>
</feature>
<feature type="binding site" evidence="1">
    <location>
        <position position="78"/>
    </location>
    <ligand>
        <name>substrate</name>
    </ligand>
</feature>
<feature type="binding site" evidence="1">
    <location>
        <position position="154"/>
    </location>
    <ligand>
        <name>substrate</name>
    </ligand>
</feature>
<feature type="binding site" evidence="1">
    <location>
        <position position="209"/>
    </location>
    <ligand>
        <name>substrate</name>
    </ligand>
</feature>
<feature type="binding site" evidence="1">
    <location>
        <position position="322"/>
    </location>
    <ligand>
        <name>substrate</name>
    </ligand>
</feature>
<feature type="site" description="Transition state stabilizer" evidence="1">
    <location>
        <position position="78"/>
    </location>
</feature>
<feature type="helix" evidence="4">
    <location>
        <begin position="10"/>
        <end position="15"/>
    </location>
</feature>
<feature type="strand" evidence="4">
    <location>
        <begin position="30"/>
        <end position="32"/>
    </location>
</feature>
<feature type="helix" evidence="4">
    <location>
        <begin position="36"/>
        <end position="52"/>
    </location>
</feature>
<feature type="helix" evidence="4">
    <location>
        <begin position="54"/>
        <end position="68"/>
    </location>
</feature>
<feature type="turn" evidence="4">
    <location>
        <begin position="79"/>
        <end position="82"/>
    </location>
</feature>
<feature type="helix" evidence="4">
    <location>
        <begin position="83"/>
        <end position="86"/>
    </location>
</feature>
<feature type="strand" evidence="4">
    <location>
        <begin position="94"/>
        <end position="96"/>
    </location>
</feature>
<feature type="strand" evidence="4">
    <location>
        <begin position="99"/>
        <end position="102"/>
    </location>
</feature>
<feature type="helix" evidence="4">
    <location>
        <begin position="107"/>
        <end position="111"/>
    </location>
</feature>
<feature type="helix" evidence="4">
    <location>
        <begin position="118"/>
        <end position="121"/>
    </location>
</feature>
<feature type="helix" evidence="4">
    <location>
        <begin position="123"/>
        <end position="135"/>
    </location>
</feature>
<feature type="strand" evidence="4">
    <location>
        <begin position="141"/>
        <end position="146"/>
    </location>
</feature>
<feature type="helix" evidence="4">
    <location>
        <begin position="148"/>
        <end position="157"/>
    </location>
</feature>
<feature type="helix" evidence="4">
    <location>
        <begin position="165"/>
        <end position="173"/>
    </location>
</feature>
<feature type="helix" evidence="4">
    <location>
        <begin position="175"/>
        <end position="198"/>
    </location>
</feature>
<feature type="strand" evidence="4">
    <location>
        <begin position="202"/>
        <end position="207"/>
    </location>
</feature>
<feature type="helix" evidence="4">
    <location>
        <begin position="211"/>
        <end position="213"/>
    </location>
</feature>
<feature type="helix" evidence="4">
    <location>
        <begin position="216"/>
        <end position="222"/>
    </location>
</feature>
<feature type="helix" evidence="4">
    <location>
        <begin position="224"/>
        <end position="234"/>
    </location>
</feature>
<feature type="helix" evidence="4">
    <location>
        <begin position="235"/>
        <end position="237"/>
    </location>
</feature>
<feature type="strand" evidence="4">
    <location>
        <begin position="241"/>
        <end position="244"/>
    </location>
</feature>
<feature type="helix" evidence="4">
    <location>
        <begin position="249"/>
        <end position="251"/>
    </location>
</feature>
<feature type="helix" evidence="4">
    <location>
        <begin position="252"/>
        <end position="256"/>
    </location>
</feature>
<feature type="strand" evidence="4">
    <location>
        <begin position="261"/>
        <end position="264"/>
    </location>
</feature>
<feature type="helix" evidence="4">
    <location>
        <begin position="271"/>
        <end position="276"/>
    </location>
</feature>
<feature type="strand" evidence="4">
    <location>
        <begin position="281"/>
        <end position="284"/>
    </location>
</feature>
<feature type="helix" evidence="4">
    <location>
        <begin position="289"/>
        <end position="293"/>
    </location>
</feature>
<feature type="helix" evidence="4">
    <location>
        <begin position="296"/>
        <end position="310"/>
    </location>
</feature>
<feature type="strand" evidence="4">
    <location>
        <begin position="316"/>
        <end position="318"/>
    </location>
</feature>
<feature type="strand" evidence="4">
    <location>
        <begin position="320"/>
        <end position="322"/>
    </location>
</feature>
<feature type="helix" evidence="4">
    <location>
        <begin position="330"/>
        <end position="348"/>
    </location>
</feature>
<reference key="1">
    <citation type="journal article" date="1992" name="J. Bacteriol.">
        <title>Cloning and characterization of the Bacillus subtilis hemEHY gene cluster, which encodes protoheme IX biosynthetic enzymes.</title>
        <authorList>
            <person name="Hansson M."/>
            <person name="Hederstedt L."/>
        </authorList>
    </citation>
    <scope>NUCLEOTIDE SEQUENCE [GENOMIC DNA]</scope>
</reference>
<reference key="2">
    <citation type="journal article" date="1998" name="Microbiology">
        <title>The 172 kb prkA-addAB region from 83 degrees to 97 degrees of the Bacillus subtilis chromosome contains several dysfunctional genes, the glyB marker, many genes encoding transporter proteins, and the ubiquitous hit gene.</title>
        <authorList>
            <person name="Noback M.A."/>
            <person name="Holsappel S."/>
            <person name="Kiewiet R."/>
            <person name="Terpstra P."/>
            <person name="Wambutt R."/>
            <person name="Wedler H."/>
            <person name="Venema G."/>
            <person name="Bron S."/>
        </authorList>
    </citation>
    <scope>NUCLEOTIDE SEQUENCE [GENOMIC DNA]</scope>
    <source>
        <strain>168</strain>
    </source>
</reference>
<reference key="3">
    <citation type="journal article" date="1997" name="Nature">
        <title>The complete genome sequence of the Gram-positive bacterium Bacillus subtilis.</title>
        <authorList>
            <person name="Kunst F."/>
            <person name="Ogasawara N."/>
            <person name="Moszer I."/>
            <person name="Albertini A.M."/>
            <person name="Alloni G."/>
            <person name="Azevedo V."/>
            <person name="Bertero M.G."/>
            <person name="Bessieres P."/>
            <person name="Bolotin A."/>
            <person name="Borchert S."/>
            <person name="Borriss R."/>
            <person name="Boursier L."/>
            <person name="Brans A."/>
            <person name="Braun M."/>
            <person name="Brignell S.C."/>
            <person name="Bron S."/>
            <person name="Brouillet S."/>
            <person name="Bruschi C.V."/>
            <person name="Caldwell B."/>
            <person name="Capuano V."/>
            <person name="Carter N.M."/>
            <person name="Choi S.-K."/>
            <person name="Codani J.-J."/>
            <person name="Connerton I.F."/>
            <person name="Cummings N.J."/>
            <person name="Daniel R.A."/>
            <person name="Denizot F."/>
            <person name="Devine K.M."/>
            <person name="Duesterhoeft A."/>
            <person name="Ehrlich S.D."/>
            <person name="Emmerson P.T."/>
            <person name="Entian K.-D."/>
            <person name="Errington J."/>
            <person name="Fabret C."/>
            <person name="Ferrari E."/>
            <person name="Foulger D."/>
            <person name="Fritz C."/>
            <person name="Fujita M."/>
            <person name="Fujita Y."/>
            <person name="Fuma S."/>
            <person name="Galizzi A."/>
            <person name="Galleron N."/>
            <person name="Ghim S.-Y."/>
            <person name="Glaser P."/>
            <person name="Goffeau A."/>
            <person name="Golightly E.J."/>
            <person name="Grandi G."/>
            <person name="Guiseppi G."/>
            <person name="Guy B.J."/>
            <person name="Haga K."/>
            <person name="Haiech J."/>
            <person name="Harwood C.R."/>
            <person name="Henaut A."/>
            <person name="Hilbert H."/>
            <person name="Holsappel S."/>
            <person name="Hosono S."/>
            <person name="Hullo M.-F."/>
            <person name="Itaya M."/>
            <person name="Jones L.-M."/>
            <person name="Joris B."/>
            <person name="Karamata D."/>
            <person name="Kasahara Y."/>
            <person name="Klaerr-Blanchard M."/>
            <person name="Klein C."/>
            <person name="Kobayashi Y."/>
            <person name="Koetter P."/>
            <person name="Koningstein G."/>
            <person name="Krogh S."/>
            <person name="Kumano M."/>
            <person name="Kurita K."/>
            <person name="Lapidus A."/>
            <person name="Lardinois S."/>
            <person name="Lauber J."/>
            <person name="Lazarevic V."/>
            <person name="Lee S.-M."/>
            <person name="Levine A."/>
            <person name="Liu H."/>
            <person name="Masuda S."/>
            <person name="Mauel C."/>
            <person name="Medigue C."/>
            <person name="Medina N."/>
            <person name="Mellado R.P."/>
            <person name="Mizuno M."/>
            <person name="Moestl D."/>
            <person name="Nakai S."/>
            <person name="Noback M."/>
            <person name="Noone D."/>
            <person name="O'Reilly M."/>
            <person name="Ogawa K."/>
            <person name="Ogiwara A."/>
            <person name="Oudega B."/>
            <person name="Park S.-H."/>
            <person name="Parro V."/>
            <person name="Pohl T.M."/>
            <person name="Portetelle D."/>
            <person name="Porwollik S."/>
            <person name="Prescott A.M."/>
            <person name="Presecan E."/>
            <person name="Pujic P."/>
            <person name="Purnelle B."/>
            <person name="Rapoport G."/>
            <person name="Rey M."/>
            <person name="Reynolds S."/>
            <person name="Rieger M."/>
            <person name="Rivolta C."/>
            <person name="Rocha E."/>
            <person name="Roche B."/>
            <person name="Rose M."/>
            <person name="Sadaie Y."/>
            <person name="Sato T."/>
            <person name="Scanlan E."/>
            <person name="Schleich S."/>
            <person name="Schroeter R."/>
            <person name="Scoffone F."/>
            <person name="Sekiguchi J."/>
            <person name="Sekowska A."/>
            <person name="Seror S.J."/>
            <person name="Serror P."/>
            <person name="Shin B.-S."/>
            <person name="Soldo B."/>
            <person name="Sorokin A."/>
            <person name="Tacconi E."/>
            <person name="Takagi T."/>
            <person name="Takahashi H."/>
            <person name="Takemaru K."/>
            <person name="Takeuchi M."/>
            <person name="Tamakoshi A."/>
            <person name="Tanaka T."/>
            <person name="Terpstra P."/>
            <person name="Tognoni A."/>
            <person name="Tosato V."/>
            <person name="Uchiyama S."/>
            <person name="Vandenbol M."/>
            <person name="Vannier F."/>
            <person name="Vassarotti A."/>
            <person name="Viari A."/>
            <person name="Wambutt R."/>
            <person name="Wedler E."/>
            <person name="Wedler H."/>
            <person name="Weitzenegger T."/>
            <person name="Winters P."/>
            <person name="Wipat A."/>
            <person name="Yamamoto H."/>
            <person name="Yamane K."/>
            <person name="Yasumoto K."/>
            <person name="Yata K."/>
            <person name="Yoshida K."/>
            <person name="Yoshikawa H.-F."/>
            <person name="Zumstein E."/>
            <person name="Yoshikawa H."/>
            <person name="Danchin A."/>
        </authorList>
    </citation>
    <scope>NUCLEOTIDE SEQUENCE [LARGE SCALE GENOMIC DNA]</scope>
    <source>
        <strain>168</strain>
    </source>
</reference>
<reference key="4">
    <citation type="journal article" date="2007" name="J. Bacteriol.">
        <title>Crystal structure of uroporphyrinogen decarboxylase from Bacillus subtilis.</title>
        <authorList>
            <person name="Fan J."/>
            <person name="Liu Q."/>
            <person name="Hao Q."/>
            <person name="Teng M."/>
            <person name="Niu L."/>
        </authorList>
    </citation>
    <scope>X-RAY CRYSTALLOGRAPHY (2.3 ANGSTROMS)</scope>
    <scope>FUNCTION</scope>
    <scope>SUBUNIT</scope>
</reference>
<keyword id="KW-0002">3D-structure</keyword>
<keyword id="KW-0963">Cytoplasm</keyword>
<keyword id="KW-0210">Decarboxylase</keyword>
<keyword id="KW-0456">Lyase</keyword>
<keyword id="KW-0627">Porphyrin biosynthesis</keyword>
<keyword id="KW-1185">Reference proteome</keyword>
<proteinExistence type="evidence at protein level"/>
<comment type="function">
    <text evidence="2">Catalyzes the decarboxylation of four acetate groups of uroporphyrinogen-III to yield coproporphyrinogen-III.</text>
</comment>
<comment type="catalytic activity">
    <reaction>
        <text>uroporphyrinogen III + 4 H(+) = coproporphyrinogen III + 4 CO2</text>
        <dbReference type="Rhea" id="RHEA:19865"/>
        <dbReference type="ChEBI" id="CHEBI:15378"/>
        <dbReference type="ChEBI" id="CHEBI:16526"/>
        <dbReference type="ChEBI" id="CHEBI:57308"/>
        <dbReference type="ChEBI" id="CHEBI:57309"/>
        <dbReference type="EC" id="4.1.1.37"/>
    </reaction>
</comment>
<comment type="pathway">
    <text>Porphyrin-containing compound metabolism; protoporphyrin-IX biosynthesis; coproporphyrinogen-III from 5-aminolevulinate: step 4/4.</text>
</comment>
<comment type="subunit">
    <text evidence="2">Homodimer.</text>
</comment>
<comment type="subcellular location">
    <subcellularLocation>
        <location evidence="1">Cytoplasm</location>
    </subcellularLocation>
</comment>
<comment type="similarity">
    <text evidence="3">Belongs to the uroporphyrinogen decarboxylase family.</text>
</comment>
<gene>
    <name type="primary">hemE</name>
    <name type="ordered locus">BSU10120</name>
</gene>
<dbReference type="EC" id="4.1.1.37"/>
<dbReference type="EMBL" id="M97208">
    <property type="protein sequence ID" value="AAA22517.1"/>
    <property type="molecule type" value="Genomic_DNA"/>
</dbReference>
<dbReference type="EMBL" id="Y14083">
    <property type="protein sequence ID" value="CAA74518.1"/>
    <property type="molecule type" value="Genomic_DNA"/>
</dbReference>
<dbReference type="EMBL" id="AL009126">
    <property type="protein sequence ID" value="CAB12852.1"/>
    <property type="molecule type" value="Genomic_DNA"/>
</dbReference>
<dbReference type="PIR" id="B47045">
    <property type="entry name" value="B47045"/>
</dbReference>
<dbReference type="RefSeq" id="NP_388893.1">
    <property type="nucleotide sequence ID" value="NC_000964.3"/>
</dbReference>
<dbReference type="RefSeq" id="WP_009966929.1">
    <property type="nucleotide sequence ID" value="NZ_OZ025638.1"/>
</dbReference>
<dbReference type="PDB" id="2INF">
    <property type="method" value="X-ray"/>
    <property type="resolution" value="2.30 A"/>
    <property type="chains" value="A/B/C/D=1-353"/>
</dbReference>
<dbReference type="PDBsum" id="2INF"/>
<dbReference type="SMR" id="P32395"/>
<dbReference type="FunCoup" id="P32395">
    <property type="interactions" value="755"/>
</dbReference>
<dbReference type="STRING" id="224308.BSU10120"/>
<dbReference type="jPOST" id="P32395"/>
<dbReference type="PaxDb" id="224308-BSU10120"/>
<dbReference type="EnsemblBacteria" id="CAB12852">
    <property type="protein sequence ID" value="CAB12852"/>
    <property type="gene ID" value="BSU_10120"/>
</dbReference>
<dbReference type="GeneID" id="936296"/>
<dbReference type="KEGG" id="bsu:BSU10120"/>
<dbReference type="PATRIC" id="fig|224308.179.peg.1088"/>
<dbReference type="eggNOG" id="COG0407">
    <property type="taxonomic scope" value="Bacteria"/>
</dbReference>
<dbReference type="InParanoid" id="P32395"/>
<dbReference type="OrthoDB" id="9806656at2"/>
<dbReference type="PhylomeDB" id="P32395"/>
<dbReference type="BioCyc" id="BSUB:BSU10120-MONOMER"/>
<dbReference type="BioCyc" id="MetaCyc:BSU10120-MONOMER"/>
<dbReference type="UniPathway" id="UPA00251">
    <property type="reaction ID" value="UER00321"/>
</dbReference>
<dbReference type="EvolutionaryTrace" id="P32395"/>
<dbReference type="Proteomes" id="UP000001570">
    <property type="component" value="Chromosome"/>
</dbReference>
<dbReference type="GO" id="GO:0005829">
    <property type="term" value="C:cytosol"/>
    <property type="evidence" value="ECO:0000318"/>
    <property type="project" value="GO_Central"/>
</dbReference>
<dbReference type="GO" id="GO:0004853">
    <property type="term" value="F:uroporphyrinogen decarboxylase activity"/>
    <property type="evidence" value="ECO:0000318"/>
    <property type="project" value="GO_Central"/>
</dbReference>
<dbReference type="GO" id="GO:0006783">
    <property type="term" value="P:heme biosynthetic process"/>
    <property type="evidence" value="ECO:0000318"/>
    <property type="project" value="GO_Central"/>
</dbReference>
<dbReference type="GO" id="GO:0006782">
    <property type="term" value="P:protoporphyrinogen IX biosynthetic process"/>
    <property type="evidence" value="ECO:0007669"/>
    <property type="project" value="UniProtKB-UniRule"/>
</dbReference>
<dbReference type="CDD" id="cd00717">
    <property type="entry name" value="URO-D"/>
    <property type="match status" value="1"/>
</dbReference>
<dbReference type="FunFam" id="3.20.20.210:FF:000005">
    <property type="entry name" value="Uroporphyrinogen decarboxylase"/>
    <property type="match status" value="1"/>
</dbReference>
<dbReference type="Gene3D" id="3.20.20.210">
    <property type="match status" value="1"/>
</dbReference>
<dbReference type="HAMAP" id="MF_00218">
    <property type="entry name" value="URO_D"/>
    <property type="match status" value="1"/>
</dbReference>
<dbReference type="InterPro" id="IPR038071">
    <property type="entry name" value="UROD/MetE-like_sf"/>
</dbReference>
<dbReference type="InterPro" id="IPR006361">
    <property type="entry name" value="Uroporphyrinogen_deCO2ase_HemE"/>
</dbReference>
<dbReference type="InterPro" id="IPR000257">
    <property type="entry name" value="Uroporphyrinogen_deCOase"/>
</dbReference>
<dbReference type="NCBIfam" id="TIGR01464">
    <property type="entry name" value="hemE"/>
    <property type="match status" value="1"/>
</dbReference>
<dbReference type="PANTHER" id="PTHR21091">
    <property type="entry name" value="METHYLTETRAHYDROFOLATE:HOMOCYSTEINE METHYLTRANSFERASE RELATED"/>
    <property type="match status" value="1"/>
</dbReference>
<dbReference type="PANTHER" id="PTHR21091:SF169">
    <property type="entry name" value="UROPORPHYRINOGEN DECARBOXYLASE"/>
    <property type="match status" value="1"/>
</dbReference>
<dbReference type="Pfam" id="PF01208">
    <property type="entry name" value="URO-D"/>
    <property type="match status" value="1"/>
</dbReference>
<dbReference type="SUPFAM" id="SSF51726">
    <property type="entry name" value="UROD/MetE-like"/>
    <property type="match status" value="1"/>
</dbReference>
<dbReference type="PROSITE" id="PS00906">
    <property type="entry name" value="UROD_1"/>
    <property type="match status" value="1"/>
</dbReference>
<dbReference type="PROSITE" id="PS00907">
    <property type="entry name" value="UROD_2"/>
    <property type="match status" value="1"/>
</dbReference>
<evidence type="ECO:0000250" key="1"/>
<evidence type="ECO:0000269" key="2">
    <source>
    </source>
</evidence>
<evidence type="ECO:0000305" key="3"/>
<evidence type="ECO:0007829" key="4">
    <source>
        <dbReference type="PDB" id="2INF"/>
    </source>
</evidence>
<name>DCUP_BACSU</name>